<proteinExistence type="inferred from homology"/>
<gene>
    <name evidence="1" type="primary">rps18</name>
</gene>
<name>RR18_LOBMA</name>
<feature type="chain" id="PRO_0000345593" description="Small ribosomal subunit protein bS18c">
    <location>
        <begin position="1"/>
        <end position="101"/>
    </location>
</feature>
<feature type="region of interest" description="Disordered" evidence="2">
    <location>
        <begin position="1"/>
        <end position="23"/>
    </location>
</feature>
<feature type="compositionally biased region" description="Basic residues" evidence="2">
    <location>
        <begin position="1"/>
        <end position="19"/>
    </location>
</feature>
<dbReference type="EMBL" id="AP009375">
    <property type="protein sequence ID" value="BAF50571.1"/>
    <property type="molecule type" value="Genomic_DNA"/>
</dbReference>
<dbReference type="RefSeq" id="YP_001123747.1">
    <property type="nucleotide sequence ID" value="NC_009274.1"/>
</dbReference>
<dbReference type="SMR" id="A4QLL6"/>
<dbReference type="GeneID" id="4964904"/>
<dbReference type="GO" id="GO:0009507">
    <property type="term" value="C:chloroplast"/>
    <property type="evidence" value="ECO:0007669"/>
    <property type="project" value="UniProtKB-SubCell"/>
</dbReference>
<dbReference type="GO" id="GO:0005763">
    <property type="term" value="C:mitochondrial small ribosomal subunit"/>
    <property type="evidence" value="ECO:0007669"/>
    <property type="project" value="TreeGrafter"/>
</dbReference>
<dbReference type="GO" id="GO:0070181">
    <property type="term" value="F:small ribosomal subunit rRNA binding"/>
    <property type="evidence" value="ECO:0007669"/>
    <property type="project" value="TreeGrafter"/>
</dbReference>
<dbReference type="GO" id="GO:0003735">
    <property type="term" value="F:structural constituent of ribosome"/>
    <property type="evidence" value="ECO:0007669"/>
    <property type="project" value="InterPro"/>
</dbReference>
<dbReference type="GO" id="GO:0006412">
    <property type="term" value="P:translation"/>
    <property type="evidence" value="ECO:0007669"/>
    <property type="project" value="UniProtKB-UniRule"/>
</dbReference>
<dbReference type="FunFam" id="4.10.640.10:FF:000002">
    <property type="entry name" value="30S ribosomal protein S18, chloroplastic"/>
    <property type="match status" value="1"/>
</dbReference>
<dbReference type="Gene3D" id="4.10.640.10">
    <property type="entry name" value="Ribosomal protein S18"/>
    <property type="match status" value="1"/>
</dbReference>
<dbReference type="HAMAP" id="MF_00270">
    <property type="entry name" value="Ribosomal_bS18"/>
    <property type="match status" value="1"/>
</dbReference>
<dbReference type="InterPro" id="IPR001648">
    <property type="entry name" value="Ribosomal_bS18"/>
</dbReference>
<dbReference type="InterPro" id="IPR018275">
    <property type="entry name" value="Ribosomal_bS18_CS"/>
</dbReference>
<dbReference type="InterPro" id="IPR036870">
    <property type="entry name" value="Ribosomal_bS18_sf"/>
</dbReference>
<dbReference type="NCBIfam" id="TIGR00165">
    <property type="entry name" value="S18"/>
    <property type="match status" value="1"/>
</dbReference>
<dbReference type="PANTHER" id="PTHR13479">
    <property type="entry name" value="30S RIBOSOMAL PROTEIN S18"/>
    <property type="match status" value="1"/>
</dbReference>
<dbReference type="PANTHER" id="PTHR13479:SF40">
    <property type="entry name" value="SMALL RIBOSOMAL SUBUNIT PROTEIN BS18M"/>
    <property type="match status" value="1"/>
</dbReference>
<dbReference type="Pfam" id="PF01084">
    <property type="entry name" value="Ribosomal_S18"/>
    <property type="match status" value="1"/>
</dbReference>
<dbReference type="PRINTS" id="PR00974">
    <property type="entry name" value="RIBOSOMALS18"/>
</dbReference>
<dbReference type="SUPFAM" id="SSF46911">
    <property type="entry name" value="Ribosomal protein S18"/>
    <property type="match status" value="1"/>
</dbReference>
<dbReference type="PROSITE" id="PS00057">
    <property type="entry name" value="RIBOSOMAL_S18"/>
    <property type="match status" value="1"/>
</dbReference>
<accession>A4QLL6</accession>
<sequence>MNKSKRPFTKSKRSFRRRLPPIQSGDRIDYRNMSLISRFISEQGKILSRRVNRVTLKQQRLITIAIKQARILSLLPFLTNQKQFERSESTPRTTSLRTRKK</sequence>
<geneLocation type="chloroplast"/>
<comment type="subunit">
    <text evidence="1">Part of the 30S ribosomal subunit.</text>
</comment>
<comment type="subcellular location">
    <subcellularLocation>
        <location>Plastid</location>
        <location>Chloroplast</location>
    </subcellularLocation>
</comment>
<comment type="similarity">
    <text evidence="1">Belongs to the bacterial ribosomal protein bS18 family.</text>
</comment>
<evidence type="ECO:0000255" key="1">
    <source>
        <dbReference type="HAMAP-Rule" id="MF_00270"/>
    </source>
</evidence>
<evidence type="ECO:0000256" key="2">
    <source>
        <dbReference type="SAM" id="MobiDB-lite"/>
    </source>
</evidence>
<evidence type="ECO:0000305" key="3"/>
<reference key="1">
    <citation type="submission" date="2007-03" db="EMBL/GenBank/DDBJ databases">
        <title>Sequencing analysis of Lobularia maritima chloroplast DNA.</title>
        <authorList>
            <person name="Hosouchi T."/>
            <person name="Tsuruoka H."/>
            <person name="Kotani H."/>
        </authorList>
    </citation>
    <scope>NUCLEOTIDE SEQUENCE [LARGE SCALE GENOMIC DNA]</scope>
</reference>
<protein>
    <recommendedName>
        <fullName evidence="1">Small ribosomal subunit protein bS18c</fullName>
    </recommendedName>
    <alternativeName>
        <fullName evidence="3">30S ribosomal protein S18, chloroplastic</fullName>
    </alternativeName>
</protein>
<keyword id="KW-0150">Chloroplast</keyword>
<keyword id="KW-0934">Plastid</keyword>
<keyword id="KW-0687">Ribonucleoprotein</keyword>
<keyword id="KW-0689">Ribosomal protein</keyword>
<keyword id="KW-0694">RNA-binding</keyword>
<keyword id="KW-0699">rRNA-binding</keyword>
<organism>
    <name type="scientific">Lobularia maritima</name>
    <name type="common">Sweet alyssum</name>
    <name type="synonym">Alyssum maritimum</name>
    <dbReference type="NCBI Taxonomy" id="226051"/>
    <lineage>
        <taxon>Eukaryota</taxon>
        <taxon>Viridiplantae</taxon>
        <taxon>Streptophyta</taxon>
        <taxon>Embryophyta</taxon>
        <taxon>Tracheophyta</taxon>
        <taxon>Spermatophyta</taxon>
        <taxon>Magnoliopsida</taxon>
        <taxon>eudicotyledons</taxon>
        <taxon>Gunneridae</taxon>
        <taxon>Pentapetalae</taxon>
        <taxon>rosids</taxon>
        <taxon>malvids</taxon>
        <taxon>Brassicales</taxon>
        <taxon>Brassicaceae</taxon>
        <taxon>Anastaticeae</taxon>
        <taxon>Lobularia</taxon>
    </lineage>
</organism>